<proteinExistence type="evidence at protein level"/>
<keyword id="KW-0002">3D-structure</keyword>
<keyword id="KW-0009">Actin-binding</keyword>
<keyword id="KW-0025">Alternative splicing</keyword>
<keyword id="KW-0966">Cell projection</keyword>
<keyword id="KW-0175">Coiled coil</keyword>
<keyword id="KW-0963">Cytoplasm</keyword>
<keyword id="KW-0206">Cytoskeleton</keyword>
<keyword id="KW-0597">Phosphoprotein</keyword>
<keyword id="KW-1267">Proteomics identification</keyword>
<keyword id="KW-1185">Reference proteome</keyword>
<keyword id="KW-0879">Wnt signaling pathway</keyword>
<comment type="function">
    <text evidence="1 3 9 10">Binds to disheveled (Dvl) and Rho, and mediates Wnt-induced Dvl-Rho complex formation. May play a role as a scaffolding protein to recruit Rho-GDP and Rho-GEF, thereby enhancing Rho-GTP formation. Can direct nucleation and elongation of new actin filaments. Involved in building functional cilia (PubMed:16630611, PubMed:17482208). Involved in the organization of the subapical actin network in multiciliated epithelial cells (By similarity). Together with DAAM2, required for myocardial maturation and sarcomere assembly (By similarity). During cell division, may regulate RHOA activation that signals spindle orientation and chromosomal segregation.</text>
</comment>
<comment type="subunit">
    <text evidence="9 10 12">Homodimer. Interacts with CIP4, FNBP1 and FNBP1L. Interacts with the SH3 domains of Abl, BTK, endophilin, spectrin and SRC. Binds specifically to GTP-bound CDC42 and RHOA. Interacts with INTU; INTU mediates the indirect interaction between DAAM1 and NPHP4. Interacts (via coiled coil domain) with KANK1 (via coiled coil domain).</text>
</comment>
<comment type="interaction">
    <interactant intactId="EBI-2817289">
        <id>Q9Y4D1</id>
    </interactant>
    <interactant intactId="EBI-2817289">
        <id>Q9Y4D1</id>
        <label>DAAM1</label>
    </interactant>
    <organismsDiffer>false</organismsDiffer>
    <experiments>2</experiments>
</comment>
<comment type="interaction">
    <interactant intactId="EBI-2817289">
        <id>Q9Y4D1</id>
    </interactant>
    <interactant intactId="EBI-714058">
        <id>Q5T0N5</id>
        <label>FNBP1L</label>
    </interactant>
    <organismsDiffer>false</organismsDiffer>
    <experiments>2</experiments>
</comment>
<comment type="interaction">
    <interactant intactId="EBI-2817289">
        <id>Q9Y4D1</id>
    </interactant>
    <interactant intactId="EBI-11762696">
        <id>Q9ULD6</id>
        <label>INTU</label>
    </interactant>
    <organismsDiffer>false</organismsDiffer>
    <experiments>3</experiments>
</comment>
<comment type="interaction">
    <interactant intactId="EBI-2817289">
        <id>Q9Y4D1</id>
    </interactant>
    <interactant intactId="EBI-446668">
        <id>P61586</id>
        <label>RHOA</label>
    </interactant>
    <organismsDiffer>false</organismsDiffer>
    <experiments>10</experiments>
</comment>
<comment type="interaction">
    <interactant intactId="EBI-2817289">
        <id>Q9Y4D1</id>
    </interactant>
    <interactant intactId="EBI-747589">
        <id>P08134</id>
        <label>RHOC</label>
    </interactant>
    <organismsDiffer>false</organismsDiffer>
    <experiments>3</experiments>
</comment>
<comment type="interaction">
    <interactant intactId="EBI-2817289">
        <id>Q9Y4D1</id>
    </interactant>
    <interactant intactId="EBI-3918631">
        <id>O00212</id>
        <label>RHOD</label>
    </interactant>
    <organismsDiffer>false</organismsDiffer>
    <experiments>3</experiments>
</comment>
<comment type="interaction">
    <interactant intactId="EBI-2817289">
        <id>Q9Y4D1</id>
    </interactant>
    <interactant intactId="EBI-6550597">
        <id>Q15642-2</id>
        <label>TRIP10</label>
    </interactant>
    <organismsDiffer>false</organismsDiffer>
    <experiments>2</experiments>
</comment>
<comment type="interaction">
    <interactant intactId="EBI-2817289">
        <id>Q9Y4D1</id>
    </interactant>
    <interactant intactId="EBI-848039">
        <id>P00523</id>
        <label>SRC</label>
    </interactant>
    <organismsDiffer>true</organismsDiffer>
    <experiments>3</experiments>
</comment>
<comment type="interaction">
    <interactant intactId="EBI-15677700">
        <id>Q9Y4D1-1</id>
    </interactant>
    <interactant intactId="EBI-15677700">
        <id>Q9Y4D1-1</id>
        <label>DAAM1</label>
    </interactant>
    <organismsDiffer>false</organismsDiffer>
    <experiments>3</experiments>
</comment>
<comment type="interaction">
    <interactant intactId="EBI-15677700">
        <id>Q9Y4D1-1</id>
    </interactant>
    <interactant intactId="EBI-641940">
        <id>Q60838</id>
        <label>Dvl2</label>
    </interactant>
    <organismsDiffer>true</organismsDiffer>
    <experiments>4</experiments>
</comment>
<comment type="subcellular location">
    <subcellularLocation>
        <location evidence="9">Cytoplasm</location>
    </subcellularLocation>
    <subcellularLocation>
        <location evidence="11">Cytoplasm</location>
        <location evidence="11">Cytoskeleton</location>
        <location evidence="11">Cilium basal body</location>
    </subcellularLocation>
    <text evidence="3">Perinuclear. Colocalizes with RHOA and KANK1 around centrosomes.</text>
</comment>
<comment type="alternative products">
    <event type="alternative splicing"/>
    <isoform>
        <id>Q9Y4D1-1</id>
        <name>1</name>
        <sequence type="displayed"/>
    </isoform>
    <isoform>
        <id>Q9Y4D1-2</id>
        <name>2</name>
        <sequence type="described" ref="VSP_008000"/>
    </isoform>
    <isoform>
        <id>Q9Y4D1-3</id>
        <name>3</name>
        <sequence type="described" ref="VSP_008001 VSP_008002 VSP_008003"/>
    </isoform>
</comment>
<comment type="tissue specificity">
    <text>Expressed in all tissues examined.</text>
</comment>
<comment type="domain">
    <text>The C-terminal DAD domain may participate in intramolecular interactions with the N-terminus.</text>
</comment>
<comment type="domain">
    <text evidence="2">The DAD domain regulates activation via by an autoinhibitory interaction with the GBD/FH3 domain. This autoinhibition is released upon competitive binding of an activated GTPase. The release of DAD allows the FH2 domain to then nucleate and elongate nonbranched actin filaments (By similarity).</text>
</comment>
<comment type="similarity">
    <text evidence="15">Belongs to the formin homology family.</text>
</comment>
<comment type="sequence caution" evidence="15">
    <conflict type="erroneous initiation">
        <sequence resource="EMBL-CDS" id="BAA31641"/>
    </conflict>
</comment>
<comment type="sequence caution" evidence="15">
    <conflict type="erroneous initiation">
        <sequence resource="EMBL-CDS" id="BAC04230"/>
    </conflict>
</comment>
<organism>
    <name type="scientific">Homo sapiens</name>
    <name type="common">Human</name>
    <dbReference type="NCBI Taxonomy" id="9606"/>
    <lineage>
        <taxon>Eukaryota</taxon>
        <taxon>Metazoa</taxon>
        <taxon>Chordata</taxon>
        <taxon>Craniata</taxon>
        <taxon>Vertebrata</taxon>
        <taxon>Euteleostomi</taxon>
        <taxon>Mammalia</taxon>
        <taxon>Eutheria</taxon>
        <taxon>Euarchontoglires</taxon>
        <taxon>Primates</taxon>
        <taxon>Haplorrhini</taxon>
        <taxon>Catarrhini</taxon>
        <taxon>Hominidae</taxon>
        <taxon>Homo</taxon>
    </lineage>
</organism>
<evidence type="ECO:0000250" key="1">
    <source>
        <dbReference type="UniProtKB" id="B0DOB5"/>
    </source>
</evidence>
<evidence type="ECO:0000250" key="2">
    <source>
        <dbReference type="UniProtKB" id="O08808"/>
    </source>
</evidence>
<evidence type="ECO:0000250" key="3">
    <source>
        <dbReference type="UniProtKB" id="Q8BPM0"/>
    </source>
</evidence>
<evidence type="ECO:0000255" key="4"/>
<evidence type="ECO:0000255" key="5">
    <source>
        <dbReference type="PROSITE-ProRule" id="PRU00577"/>
    </source>
</evidence>
<evidence type="ECO:0000255" key="6">
    <source>
        <dbReference type="PROSITE-ProRule" id="PRU00579"/>
    </source>
</evidence>
<evidence type="ECO:0000255" key="7">
    <source>
        <dbReference type="PROSITE-ProRule" id="PRU00774"/>
    </source>
</evidence>
<evidence type="ECO:0000256" key="8">
    <source>
        <dbReference type="SAM" id="MobiDB-lite"/>
    </source>
</evidence>
<evidence type="ECO:0000269" key="9">
    <source>
    </source>
</evidence>
<evidence type="ECO:0000269" key="10">
    <source>
    </source>
</evidence>
<evidence type="ECO:0000269" key="11">
    <source>
    </source>
</evidence>
<evidence type="ECO:0000269" key="12">
    <source>
    </source>
</evidence>
<evidence type="ECO:0000303" key="13">
    <source>
    </source>
</evidence>
<evidence type="ECO:0000303" key="14">
    <source>
    </source>
</evidence>
<evidence type="ECO:0000305" key="15"/>
<evidence type="ECO:0007744" key="16">
    <source>
    </source>
</evidence>
<evidence type="ECO:0007744" key="17">
    <source>
    </source>
</evidence>
<evidence type="ECO:0007829" key="18">
    <source>
        <dbReference type="PDB" id="2J1D"/>
    </source>
</evidence>
<evidence type="ECO:0007829" key="19">
    <source>
        <dbReference type="PDB" id="2Z6E"/>
    </source>
</evidence>
<feature type="chain" id="PRO_0000194907" description="Disheveled-associated activator of morphogenesis 1">
    <location>
        <begin position="1"/>
        <end position="1078"/>
    </location>
</feature>
<feature type="domain" description="GBD/FH3" evidence="6">
    <location>
        <begin position="45"/>
        <end position="420"/>
    </location>
</feature>
<feature type="domain" description="FH1">
    <location>
        <begin position="528"/>
        <end position="599"/>
    </location>
</feature>
<feature type="domain" description="FH2" evidence="7">
    <location>
        <begin position="600"/>
        <end position="1009"/>
    </location>
</feature>
<feature type="domain" description="DAD" evidence="5">
    <location>
        <begin position="1027"/>
        <end position="1058"/>
    </location>
</feature>
<feature type="region of interest" description="Disordered" evidence="8">
    <location>
        <begin position="456"/>
        <end position="480"/>
    </location>
</feature>
<feature type="region of interest" description="Disordered" evidence="8">
    <location>
        <begin position="524"/>
        <end position="585"/>
    </location>
</feature>
<feature type="region of interest" description="Actin-binding">
    <location>
        <begin position="693"/>
        <end position="702"/>
    </location>
</feature>
<feature type="region of interest" description="Disordered" evidence="8">
    <location>
        <begin position="987"/>
        <end position="1034"/>
    </location>
</feature>
<feature type="region of interest" description="Disordered" evidence="8">
    <location>
        <begin position="1055"/>
        <end position="1078"/>
    </location>
</feature>
<feature type="coiled-coil region" evidence="4">
    <location>
        <begin position="437"/>
        <end position="526"/>
    </location>
</feature>
<feature type="compositionally biased region" description="Pro residues" evidence="8">
    <location>
        <begin position="530"/>
        <end position="539"/>
    </location>
</feature>
<feature type="compositionally biased region" description="Pro residues" evidence="8">
    <location>
        <begin position="548"/>
        <end position="585"/>
    </location>
</feature>
<feature type="compositionally biased region" description="Basic and acidic residues" evidence="8">
    <location>
        <begin position="987"/>
        <end position="1027"/>
    </location>
</feature>
<feature type="compositionally biased region" description="Basic and acidic residues" evidence="8">
    <location>
        <begin position="1067"/>
        <end position="1078"/>
    </location>
</feature>
<feature type="modified residue" description="Phosphoserine" evidence="17">
    <location>
        <position position="34"/>
    </location>
</feature>
<feature type="modified residue" description="Phosphoserine" evidence="16 17">
    <location>
        <position position="1027"/>
    </location>
</feature>
<feature type="modified residue" description="Phosphoserine" evidence="3">
    <location>
        <position position="1030"/>
    </location>
</feature>
<feature type="splice variant" id="VSP_008000" description="In isoform 2." evidence="14">
    <location>
        <begin position="656"/>
        <end position="665"/>
    </location>
</feature>
<feature type="splice variant" id="VSP_008001" description="In isoform 3." evidence="13">
    <location>
        <begin position="788"/>
        <end position="818"/>
    </location>
</feature>
<feature type="splice variant" id="VSP_008002" description="In isoform 3." evidence="13">
    <original>NMTELDKEISTLRSGLKAVETELEYQKSQ</original>
    <variation>KSWNIRSLSPHSPEISLCLLSASSSQ</variation>
    <location>
        <begin position="888"/>
        <end position="916"/>
    </location>
</feature>
<feature type="splice variant" id="VSP_008003" description="In isoform 3." evidence="13">
    <location>
        <begin position="917"/>
        <end position="1078"/>
    </location>
</feature>
<feature type="mutagenesis site" description="Abolishes actin-binding." evidence="10">
    <original>I</original>
    <variation>A</variation>
    <location>
        <position position="698"/>
    </location>
</feature>
<feature type="sequence conflict" description="In Ref. 3; AAH24781." evidence="15" ref="3">
    <original>S</original>
    <variation>F</variation>
    <location>
        <position position="940"/>
    </location>
</feature>
<feature type="strand" evidence="19">
    <location>
        <begin position="596"/>
        <end position="598"/>
    </location>
</feature>
<feature type="helix" evidence="18">
    <location>
        <begin position="620"/>
        <end position="622"/>
    </location>
</feature>
<feature type="strand" evidence="18">
    <location>
        <begin position="624"/>
        <end position="626"/>
    </location>
</feature>
<feature type="helix" evidence="18">
    <location>
        <begin position="627"/>
        <end position="630"/>
    </location>
</feature>
<feature type="helix" evidence="18">
    <location>
        <begin position="633"/>
        <end position="635"/>
    </location>
</feature>
<feature type="helix" evidence="18">
    <location>
        <begin position="636"/>
        <end position="639"/>
    </location>
</feature>
<feature type="helix" evidence="18">
    <location>
        <begin position="642"/>
        <end position="648"/>
    </location>
</feature>
<feature type="strand" evidence="18">
    <location>
        <begin position="650"/>
        <end position="652"/>
    </location>
</feature>
<feature type="helix" evidence="18">
    <location>
        <begin position="690"/>
        <end position="703"/>
    </location>
</feature>
<feature type="helix" evidence="18">
    <location>
        <begin position="707"/>
        <end position="715"/>
    </location>
</feature>
<feature type="helix" evidence="18">
    <location>
        <begin position="725"/>
        <end position="733"/>
    </location>
</feature>
<feature type="helix" evidence="18">
    <location>
        <begin position="738"/>
        <end position="745"/>
    </location>
</feature>
<feature type="turn" evidence="18">
    <location>
        <begin position="746"/>
        <end position="749"/>
    </location>
</feature>
<feature type="helix" evidence="18">
    <location>
        <begin position="751"/>
        <end position="753"/>
    </location>
</feature>
<feature type="helix" evidence="18">
    <location>
        <begin position="756"/>
        <end position="765"/>
    </location>
</feature>
<feature type="helix" evidence="18">
    <location>
        <begin position="770"/>
        <end position="806"/>
    </location>
</feature>
<feature type="helix" evidence="18">
    <location>
        <begin position="808"/>
        <end position="824"/>
    </location>
</feature>
<feature type="strand" evidence="18">
    <location>
        <begin position="827"/>
        <end position="829"/>
    </location>
</feature>
<feature type="helix" evidence="18">
    <location>
        <begin position="837"/>
        <end position="845"/>
    </location>
</feature>
<feature type="helix" evidence="18">
    <location>
        <begin position="856"/>
        <end position="867"/>
    </location>
</feature>
<feature type="helix" evidence="18">
    <location>
        <begin position="869"/>
        <end position="873"/>
    </location>
</feature>
<feature type="helix" evidence="18">
    <location>
        <begin position="874"/>
        <end position="877"/>
    </location>
</feature>
<feature type="turn" evidence="18">
    <location>
        <begin position="878"/>
        <end position="880"/>
    </location>
</feature>
<feature type="helix" evidence="18">
    <location>
        <begin position="881"/>
        <end position="885"/>
    </location>
</feature>
<feature type="helix" evidence="18">
    <location>
        <begin position="889"/>
        <end position="914"/>
    </location>
</feature>
<feature type="helix" evidence="18">
    <location>
        <begin position="924"/>
        <end position="959"/>
    </location>
</feature>
<feature type="helix" evidence="18">
    <location>
        <begin position="969"/>
        <end position="994"/>
    </location>
</feature>
<feature type="helix" evidence="18">
    <location>
        <begin position="996"/>
        <end position="999"/>
    </location>
</feature>
<feature type="helix" evidence="18">
    <location>
        <begin position="1001"/>
        <end position="1022"/>
    </location>
</feature>
<sequence length="1078" mass="123473">MAPRKRGGRGISFIFCCFRNNDHPEITYRLRNDSNFALQTMEPALPMPPVEELDVMFSELVDELDLTDKHREAMFALPAEKKWQIYCSKKKDQEENKGATSWPEFYIDQLNSMAARKSLLALEKEEEEERSKTIESLKTALRTKPMRFVTRFIDLDGLSCILNFLKTMDYETSESRIHTSLIGCIKALMNNSQGRAHVLAHSESINVIAQSLSTENIKTKVAVLEILGAVCLVPGGHKKVLQAMLHYQKYASERTRFQTLINDLDKSTGRYRDEVSLKTAIMSFINAVLSQGAGVESLDFRLHLRYEFLMLGIQPVIDKLREHENSTLDRHLDFFEMLRNEDELEFAKRFELVHIDTKSATQMFELTRKRLTHSEAYPHFMSILHHCLQMPYKRSGNTVQYWLLLDRIIQQIVIQNDKGQDPDSTPLENFNIKNVVRMLVNENEVKQWKEQAEKMRKEHNELQQKLEKKERECDAKTQEKEEMMQTLNKMKEKLEKETTEHKQVKQQVADLTAQLHELSRRAVCASIPGGPSPGAPGGPFPSSVPGSLLPPPPPPPLPGGMLPPPPPPLPPGGPPPPPGPPPLGAIMPPPGAPMGLALKKKSIPQPTNALKSFNWSKLPENKLEGTVWTEIDDTKVFKILDLEDLERTFSAYQRQQDFFVNSNSKQKEADAIDDTLSSKLKVKELSVIDGRRAQNCNILLSRLKLSNDEIKRAILTMDEQEDLPKDMLEQLLKFVPEKSDIDLLEEHKHELDRMAKADRFLFEMSRINHYQQRLQSLYFKKKFAERVAEVKPKVEAIRSGSEEVFRSGALKQLLEVVLAFGNYMNKGQRGNAYGFKISSLNKIADTKSSIDKNITLLHYLITIVENKYPSVLNLNEELRDIPQAAKVNMTELDKEISTLRSGLKAVETELEYQKSQPPQPGDKFVSVVSQFITVASFSFSDVEDLLAEAKDLFTKAVKHFGEEAGKIQPDEFFGIFDQFLQAVSEAKQENENMRKKKEEEERRARMEAQLKEQRERERKMRKAKENSEESGEFDDLVSALRSGEVFDKDLSKLKRNRKRITNQMTDSSRERPITKLNF</sequence>
<reference key="1">
    <citation type="journal article" date="1998" name="DNA Res.">
        <title>Prediction of the coding sequences of unidentified human genes. X. The complete sequences of 100 new cDNA clones from brain which can code for large proteins in vitro.</title>
        <authorList>
            <person name="Ishikawa K."/>
            <person name="Nagase T."/>
            <person name="Suyama M."/>
            <person name="Miyajima N."/>
            <person name="Tanaka A."/>
            <person name="Kotani H."/>
            <person name="Nomura N."/>
            <person name="Ohara O."/>
        </authorList>
    </citation>
    <scope>NUCLEOTIDE SEQUENCE [LARGE SCALE MRNA] (ISOFORM 1)</scope>
    <source>
        <tissue>Brain</tissue>
    </source>
</reference>
<reference key="2">
    <citation type="journal article" date="2003" name="Nature">
        <title>The DNA sequence and analysis of human chromosome 14.</title>
        <authorList>
            <person name="Heilig R."/>
            <person name="Eckenberg R."/>
            <person name="Petit J.-L."/>
            <person name="Fonknechten N."/>
            <person name="Da Silva C."/>
            <person name="Cattolico L."/>
            <person name="Levy M."/>
            <person name="Barbe V."/>
            <person name="De Berardinis V."/>
            <person name="Ureta-Vidal A."/>
            <person name="Pelletier E."/>
            <person name="Vico V."/>
            <person name="Anthouard V."/>
            <person name="Rowen L."/>
            <person name="Madan A."/>
            <person name="Qin S."/>
            <person name="Sun H."/>
            <person name="Du H."/>
            <person name="Pepin K."/>
            <person name="Artiguenave F."/>
            <person name="Robert C."/>
            <person name="Cruaud C."/>
            <person name="Bruels T."/>
            <person name="Jaillon O."/>
            <person name="Friedlander L."/>
            <person name="Samson G."/>
            <person name="Brottier P."/>
            <person name="Cure S."/>
            <person name="Segurens B."/>
            <person name="Aniere F."/>
            <person name="Samain S."/>
            <person name="Crespeau H."/>
            <person name="Abbasi N."/>
            <person name="Aiach N."/>
            <person name="Boscus D."/>
            <person name="Dickhoff R."/>
            <person name="Dors M."/>
            <person name="Dubois I."/>
            <person name="Friedman C."/>
            <person name="Gouyvenoux M."/>
            <person name="James R."/>
            <person name="Madan A."/>
            <person name="Mairey-Estrada B."/>
            <person name="Mangenot S."/>
            <person name="Martins N."/>
            <person name="Menard M."/>
            <person name="Oztas S."/>
            <person name="Ratcliffe A."/>
            <person name="Shaffer T."/>
            <person name="Trask B."/>
            <person name="Vacherie B."/>
            <person name="Bellemere C."/>
            <person name="Belser C."/>
            <person name="Besnard-Gonnet M."/>
            <person name="Bartol-Mavel D."/>
            <person name="Boutard M."/>
            <person name="Briez-Silla S."/>
            <person name="Combette S."/>
            <person name="Dufosse-Laurent V."/>
            <person name="Ferron C."/>
            <person name="Lechaplais C."/>
            <person name="Louesse C."/>
            <person name="Muselet D."/>
            <person name="Magdelenat G."/>
            <person name="Pateau E."/>
            <person name="Petit E."/>
            <person name="Sirvain-Trukniewicz P."/>
            <person name="Trybou A."/>
            <person name="Vega-Czarny N."/>
            <person name="Bataille E."/>
            <person name="Bluet E."/>
            <person name="Bordelais I."/>
            <person name="Dubois M."/>
            <person name="Dumont C."/>
            <person name="Guerin T."/>
            <person name="Haffray S."/>
            <person name="Hammadi R."/>
            <person name="Muanga J."/>
            <person name="Pellouin V."/>
            <person name="Robert D."/>
            <person name="Wunderle E."/>
            <person name="Gauguet G."/>
            <person name="Roy A."/>
            <person name="Sainte-Marthe L."/>
            <person name="Verdier J."/>
            <person name="Verdier-Discala C."/>
            <person name="Hillier L.W."/>
            <person name="Fulton L."/>
            <person name="McPherson J."/>
            <person name="Matsuda F."/>
            <person name="Wilson R."/>
            <person name="Scarpelli C."/>
            <person name="Gyapay G."/>
            <person name="Wincker P."/>
            <person name="Saurin W."/>
            <person name="Quetier F."/>
            <person name="Waterston R."/>
            <person name="Hood L."/>
            <person name="Weissenbach J."/>
        </authorList>
    </citation>
    <scope>NUCLEOTIDE SEQUENCE [LARGE SCALE GENOMIC DNA]</scope>
</reference>
<reference key="3">
    <citation type="journal article" date="2004" name="Genome Res.">
        <title>The status, quality, and expansion of the NIH full-length cDNA project: the Mammalian Gene Collection (MGC).</title>
        <authorList>
            <consortium name="The MGC Project Team"/>
        </authorList>
    </citation>
    <scope>NUCLEOTIDE SEQUENCE [LARGE SCALE MRNA] (ISOFORM 2)</scope>
    <source>
        <tissue>Placenta</tissue>
        <tissue>Uterus</tissue>
    </source>
</reference>
<reference key="4">
    <citation type="submission" date="2003-02" db="EMBL/GenBank/DDBJ databases">
        <title>Full-length cDNA libraries and normalization.</title>
        <authorList>
            <person name="Li W.B."/>
            <person name="Gruber C."/>
            <person name="Jessee J."/>
            <person name="Polayes D."/>
        </authorList>
    </citation>
    <scope>NUCLEOTIDE SEQUENCE [LARGE SCALE MRNA] OF 1-497 (ISOFORM 1)</scope>
    <source>
        <tissue>Fetal brain</tissue>
    </source>
</reference>
<reference key="5">
    <citation type="journal article" date="2004" name="Nat. Genet.">
        <title>Complete sequencing and characterization of 21,243 full-length human cDNAs.</title>
        <authorList>
            <person name="Ota T."/>
            <person name="Suzuki Y."/>
            <person name="Nishikawa T."/>
            <person name="Otsuki T."/>
            <person name="Sugiyama T."/>
            <person name="Irie R."/>
            <person name="Wakamatsu A."/>
            <person name="Hayashi K."/>
            <person name="Sato H."/>
            <person name="Nagai K."/>
            <person name="Kimura K."/>
            <person name="Makita H."/>
            <person name="Sekine M."/>
            <person name="Obayashi M."/>
            <person name="Nishi T."/>
            <person name="Shibahara T."/>
            <person name="Tanaka T."/>
            <person name="Ishii S."/>
            <person name="Yamamoto J."/>
            <person name="Saito K."/>
            <person name="Kawai Y."/>
            <person name="Isono Y."/>
            <person name="Nakamura Y."/>
            <person name="Nagahari K."/>
            <person name="Murakami K."/>
            <person name="Yasuda T."/>
            <person name="Iwayanagi T."/>
            <person name="Wagatsuma M."/>
            <person name="Shiratori A."/>
            <person name="Sudo H."/>
            <person name="Hosoiri T."/>
            <person name="Kaku Y."/>
            <person name="Kodaira H."/>
            <person name="Kondo H."/>
            <person name="Sugawara M."/>
            <person name="Takahashi M."/>
            <person name="Kanda K."/>
            <person name="Yokoi T."/>
            <person name="Furuya T."/>
            <person name="Kikkawa E."/>
            <person name="Omura Y."/>
            <person name="Abe K."/>
            <person name="Kamihara K."/>
            <person name="Katsuta N."/>
            <person name="Sato K."/>
            <person name="Tanikawa M."/>
            <person name="Yamazaki M."/>
            <person name="Ninomiya K."/>
            <person name="Ishibashi T."/>
            <person name="Yamashita H."/>
            <person name="Murakawa K."/>
            <person name="Fujimori K."/>
            <person name="Tanai H."/>
            <person name="Kimata M."/>
            <person name="Watanabe M."/>
            <person name="Hiraoka S."/>
            <person name="Chiba Y."/>
            <person name="Ishida S."/>
            <person name="Ono Y."/>
            <person name="Takiguchi S."/>
            <person name="Watanabe S."/>
            <person name="Yosida M."/>
            <person name="Hotuta T."/>
            <person name="Kusano J."/>
            <person name="Kanehori K."/>
            <person name="Takahashi-Fujii A."/>
            <person name="Hara H."/>
            <person name="Tanase T.-O."/>
            <person name="Nomura Y."/>
            <person name="Togiya S."/>
            <person name="Komai F."/>
            <person name="Hara R."/>
            <person name="Takeuchi K."/>
            <person name="Arita M."/>
            <person name="Imose N."/>
            <person name="Musashino K."/>
            <person name="Yuuki H."/>
            <person name="Oshima A."/>
            <person name="Sasaki N."/>
            <person name="Aotsuka S."/>
            <person name="Yoshikawa Y."/>
            <person name="Matsunawa H."/>
            <person name="Ichihara T."/>
            <person name="Shiohata N."/>
            <person name="Sano S."/>
            <person name="Moriya S."/>
            <person name="Momiyama H."/>
            <person name="Satoh N."/>
            <person name="Takami S."/>
            <person name="Terashima Y."/>
            <person name="Suzuki O."/>
            <person name="Nakagawa S."/>
            <person name="Senoh A."/>
            <person name="Mizoguchi H."/>
            <person name="Goto Y."/>
            <person name="Shimizu F."/>
            <person name="Wakebe H."/>
            <person name="Hishigaki H."/>
            <person name="Watanabe T."/>
            <person name="Sugiyama A."/>
            <person name="Takemoto M."/>
            <person name="Kawakami B."/>
            <person name="Yamazaki M."/>
            <person name="Watanabe K."/>
            <person name="Kumagai A."/>
            <person name="Itakura S."/>
            <person name="Fukuzumi Y."/>
            <person name="Fujimori Y."/>
            <person name="Komiyama M."/>
            <person name="Tashiro H."/>
            <person name="Tanigami A."/>
            <person name="Fujiwara T."/>
            <person name="Ono T."/>
            <person name="Yamada K."/>
            <person name="Fujii Y."/>
            <person name="Ozaki K."/>
            <person name="Hirao M."/>
            <person name="Ohmori Y."/>
            <person name="Kawabata A."/>
            <person name="Hikiji T."/>
            <person name="Kobatake N."/>
            <person name="Inagaki H."/>
            <person name="Ikema Y."/>
            <person name="Okamoto S."/>
            <person name="Okitani R."/>
            <person name="Kawakami T."/>
            <person name="Noguchi S."/>
            <person name="Itoh T."/>
            <person name="Shigeta K."/>
            <person name="Senba T."/>
            <person name="Matsumura K."/>
            <person name="Nakajima Y."/>
            <person name="Mizuno T."/>
            <person name="Morinaga M."/>
            <person name="Sasaki M."/>
            <person name="Togashi T."/>
            <person name="Oyama M."/>
            <person name="Hata H."/>
            <person name="Watanabe M."/>
            <person name="Komatsu T."/>
            <person name="Mizushima-Sugano J."/>
            <person name="Satoh T."/>
            <person name="Shirai Y."/>
            <person name="Takahashi Y."/>
            <person name="Nakagawa K."/>
            <person name="Okumura K."/>
            <person name="Nagase T."/>
            <person name="Nomura N."/>
            <person name="Kikuchi H."/>
            <person name="Masuho Y."/>
            <person name="Yamashita R."/>
            <person name="Nakai K."/>
            <person name="Yada T."/>
            <person name="Nakamura Y."/>
            <person name="Ohara O."/>
            <person name="Isogai T."/>
            <person name="Sugano S."/>
        </authorList>
    </citation>
    <scope>NUCLEOTIDE SEQUENCE [LARGE SCALE MRNA] OF 706-1078 (ISOFORM 3)</scope>
    <source>
        <tissue>Thymus</tissue>
    </source>
</reference>
<reference key="6">
    <citation type="journal article" date="2001" name="Cell">
        <title>Wnt/Frizzled activation of Rho regulates vertebrate gastrulation and requires a novel Formin homology protein Daam1.</title>
        <authorList>
            <person name="Habas R."/>
            <person name="Kato Y."/>
            <person name="He X."/>
        </authorList>
    </citation>
    <scope>CHARACTERIZATION</scope>
</reference>
<reference key="7">
    <citation type="journal article" date="2006" name="Exp. Cell Res.">
        <title>The diaphanous-related formin DAAM1 collaborates with the Rho GTPases RhoA and Cdc42, CIP4 and Src in regulating cell morphogenesis and actin dynamics.</title>
        <authorList>
            <person name="Aspenstroem P."/>
            <person name="Richnau N."/>
            <person name="Johansson A.-S."/>
        </authorList>
    </citation>
    <scope>FUNCTION</scope>
    <scope>INTERACTION WITH ABL1; BTK; CDC42; CIP4; ENDOPHILIN; FNBP1; FNBP1L; RHOA; SPECTRIN AND SRC</scope>
    <scope>SUBCELLULAR LOCATION</scope>
</reference>
<reference key="8">
    <citation type="journal article" date="2011" name="BMC Syst. Biol.">
        <title>Initial characterization of the human central proteome.</title>
        <authorList>
            <person name="Burkard T.R."/>
            <person name="Planyavsky M."/>
            <person name="Kaupe I."/>
            <person name="Breitwieser F.P."/>
            <person name="Buerckstuemmer T."/>
            <person name="Bennett K.L."/>
            <person name="Superti-Furga G."/>
            <person name="Colinge J."/>
        </authorList>
    </citation>
    <scope>IDENTIFICATION BY MASS SPECTROMETRY [LARGE SCALE ANALYSIS]</scope>
</reference>
<reference key="9">
    <citation type="journal article" date="2013" name="J. Proteome Res.">
        <title>Toward a comprehensive characterization of a human cancer cell phosphoproteome.</title>
        <authorList>
            <person name="Zhou H."/>
            <person name="Di Palma S."/>
            <person name="Preisinger C."/>
            <person name="Peng M."/>
            <person name="Polat A.N."/>
            <person name="Heck A.J."/>
            <person name="Mohammed S."/>
        </authorList>
    </citation>
    <scope>PHOSPHORYLATION [LARGE SCALE ANALYSIS] AT SER-1027</scope>
    <scope>IDENTIFICATION BY MASS SPECTROMETRY [LARGE SCALE ANALYSIS]</scope>
    <source>
        <tissue>Erythroleukemia</tissue>
    </source>
</reference>
<reference key="10">
    <citation type="journal article" date="2014" name="J. Proteomics">
        <title>An enzyme assisted RP-RPLC approach for in-depth analysis of human liver phosphoproteome.</title>
        <authorList>
            <person name="Bian Y."/>
            <person name="Song C."/>
            <person name="Cheng K."/>
            <person name="Dong M."/>
            <person name="Wang F."/>
            <person name="Huang J."/>
            <person name="Sun D."/>
            <person name="Wang L."/>
            <person name="Ye M."/>
            <person name="Zou H."/>
        </authorList>
    </citation>
    <scope>PHOSPHORYLATION [LARGE SCALE ANALYSIS] AT SER-34 AND SER-1027</scope>
    <scope>IDENTIFICATION BY MASS SPECTROMETRY [LARGE SCALE ANALYSIS]</scope>
    <source>
        <tissue>Liver</tissue>
    </source>
</reference>
<reference key="11">
    <citation type="journal article" date="2007" name="J. Mol. Biol.">
        <title>Structure of the FH2 domain of Daam1: implications for formin regulation of actin assembly.</title>
        <authorList>
            <person name="Lu J."/>
            <person name="Meng W."/>
            <person name="Poy F."/>
            <person name="Maiti S."/>
            <person name="Goode B.L."/>
            <person name="Eck M.J."/>
        </authorList>
    </citation>
    <scope>X-RAY CRYSTALLOGRAPHY (2.25 ANGSTROMS) OF 596-1078</scope>
    <scope>SUBUNIT</scope>
    <scope>MUTAGENESIS OF ILE-698</scope>
    <scope>FUNCTION</scope>
</reference>
<reference key="12">
    <citation type="journal article" date="2015" name="J. Cell Biol.">
        <title>The polarity protein Inturned links NPHP4 to Daam1 to control the subapical actin network in multiciliated cells.</title>
        <authorList>
            <person name="Yasunaga T."/>
            <person name="Hoff S."/>
            <person name="Schell C."/>
            <person name="Helmstaedter M."/>
            <person name="Kretz O."/>
            <person name="Kuechlin S."/>
            <person name="Yakulov T.A."/>
            <person name="Engel C."/>
            <person name="Mueller B."/>
            <person name="Bensch R."/>
            <person name="Ronneberger O."/>
            <person name="Huber T.B."/>
            <person name="Lienkamp S.S."/>
            <person name="Walz G."/>
        </authorList>
    </citation>
    <scope>SUBCELLULAR LOCATION</scope>
    <scope>INTERACTION WITH INTU AND NPHP4</scope>
</reference>
<reference key="13">
    <citation type="journal article" date="2017" name="Exp. Cell Res.">
        <title>Depletion of tumor suppressor Kank1 induces centrosomal amplification via hyperactivation of RhoA.</title>
        <authorList>
            <person name="Suzuki J.I."/>
            <person name="Roy B.C."/>
            <person name="Ogaeri T."/>
            <person name="Kakinuma N."/>
            <person name="Kiyama R."/>
        </authorList>
    </citation>
    <scope>INTERACTION WITH KANK1</scope>
</reference>
<name>DAAM1_HUMAN</name>
<accession>Q9Y4D1</accession>
<accession>Q86U34</accession>
<accession>Q8N1Z8</accession>
<accession>Q8TB39</accession>
<gene>
    <name type="primary">DAAM1</name>
    <name type="synonym">KIAA0666</name>
</gene>
<protein>
    <recommendedName>
        <fullName>Disheveled-associated activator of morphogenesis 1</fullName>
    </recommendedName>
</protein>
<dbReference type="EMBL" id="AB014566">
    <property type="protein sequence ID" value="BAA31641.1"/>
    <property type="status" value="ALT_INIT"/>
    <property type="molecule type" value="mRNA"/>
</dbReference>
<dbReference type="EMBL" id="AL133502">
    <property type="status" value="NOT_ANNOTATED_CDS"/>
    <property type="molecule type" value="Genomic_DNA"/>
</dbReference>
<dbReference type="EMBL" id="BC024781">
    <property type="protein sequence ID" value="AAH24781.1"/>
    <property type="molecule type" value="mRNA"/>
</dbReference>
<dbReference type="EMBL" id="BC038428">
    <property type="protein sequence ID" value="AAH38428.1"/>
    <property type="molecule type" value="mRNA"/>
</dbReference>
<dbReference type="EMBL" id="BC064999">
    <property type="protein sequence ID" value="AAH64999.1"/>
    <property type="molecule type" value="mRNA"/>
</dbReference>
<dbReference type="EMBL" id="BX247986">
    <property type="protein sequence ID" value="CAD62320.1"/>
    <property type="molecule type" value="mRNA"/>
</dbReference>
<dbReference type="EMBL" id="AK093813">
    <property type="protein sequence ID" value="BAC04230.1"/>
    <property type="status" value="ALT_INIT"/>
    <property type="molecule type" value="mRNA"/>
</dbReference>
<dbReference type="CCDS" id="CCDS58323.1">
    <molecule id="Q9Y4D1-2"/>
</dbReference>
<dbReference type="CCDS" id="CCDS9737.1">
    <molecule id="Q9Y4D1-1"/>
</dbReference>
<dbReference type="RefSeq" id="NP_001257449.1">
    <molecule id="Q9Y4D1-2"/>
    <property type="nucleotide sequence ID" value="NM_001270520.2"/>
</dbReference>
<dbReference type="RefSeq" id="NP_055807.1">
    <molecule id="Q9Y4D1-1"/>
    <property type="nucleotide sequence ID" value="NM_014992.2"/>
</dbReference>
<dbReference type="RefSeq" id="XP_005267487.1">
    <molecule id="Q9Y4D1-1"/>
    <property type="nucleotide sequence ID" value="XM_005267430.3"/>
</dbReference>
<dbReference type="RefSeq" id="XP_005267488.1">
    <molecule id="Q9Y4D1-1"/>
    <property type="nucleotide sequence ID" value="XM_005267431.2"/>
</dbReference>
<dbReference type="RefSeq" id="XP_047287091.1">
    <molecule id="Q9Y4D1-2"/>
    <property type="nucleotide sequence ID" value="XM_047431135.1"/>
</dbReference>
<dbReference type="RefSeq" id="XP_054231621.1">
    <molecule id="Q9Y4D1-1"/>
    <property type="nucleotide sequence ID" value="XM_054375646.1"/>
</dbReference>
<dbReference type="RefSeq" id="XP_054231622.1">
    <molecule id="Q9Y4D1-1"/>
    <property type="nucleotide sequence ID" value="XM_054375647.1"/>
</dbReference>
<dbReference type="RefSeq" id="XP_054231623.1">
    <molecule id="Q9Y4D1-2"/>
    <property type="nucleotide sequence ID" value="XM_054375648.1"/>
</dbReference>
<dbReference type="PDB" id="2J1D">
    <property type="method" value="X-ray"/>
    <property type="resolution" value="2.55 A"/>
    <property type="chains" value="G=596-1078"/>
</dbReference>
<dbReference type="PDB" id="2Z6E">
    <property type="method" value="X-ray"/>
    <property type="resolution" value="2.80 A"/>
    <property type="chains" value="A/B/C/D=594-1012"/>
</dbReference>
<dbReference type="PDBsum" id="2J1D"/>
<dbReference type="PDBsum" id="2Z6E"/>
<dbReference type="SMR" id="Q9Y4D1"/>
<dbReference type="BioGRID" id="116648">
    <property type="interactions" value="52"/>
</dbReference>
<dbReference type="CORUM" id="Q9Y4D1"/>
<dbReference type="DIP" id="DIP-29641N"/>
<dbReference type="FunCoup" id="Q9Y4D1">
    <property type="interactions" value="885"/>
</dbReference>
<dbReference type="IntAct" id="Q9Y4D1">
    <property type="interactions" value="48"/>
</dbReference>
<dbReference type="MINT" id="Q9Y4D1"/>
<dbReference type="STRING" id="9606.ENSP00000378557"/>
<dbReference type="GlyGen" id="Q9Y4D1">
    <property type="glycosylation" value="2 sites, 1 O-linked glycan (2 sites)"/>
</dbReference>
<dbReference type="iPTMnet" id="Q9Y4D1"/>
<dbReference type="PhosphoSitePlus" id="Q9Y4D1"/>
<dbReference type="SwissPalm" id="Q9Y4D1"/>
<dbReference type="BioMuta" id="DAAM1"/>
<dbReference type="DMDM" id="34098767"/>
<dbReference type="jPOST" id="Q9Y4D1"/>
<dbReference type="MassIVE" id="Q9Y4D1"/>
<dbReference type="PaxDb" id="9606-ENSP00000378557"/>
<dbReference type="PeptideAtlas" id="Q9Y4D1"/>
<dbReference type="ProteomicsDB" id="86164">
    <molecule id="Q9Y4D1-1"/>
</dbReference>
<dbReference type="ProteomicsDB" id="86165">
    <molecule id="Q9Y4D1-2"/>
</dbReference>
<dbReference type="ProteomicsDB" id="86166">
    <molecule id="Q9Y4D1-3"/>
</dbReference>
<dbReference type="Pumba" id="Q9Y4D1"/>
<dbReference type="Antibodypedia" id="11379">
    <property type="antibodies" value="343 antibodies from 31 providers"/>
</dbReference>
<dbReference type="DNASU" id="23002"/>
<dbReference type="Ensembl" id="ENST00000360909.8">
    <molecule id="Q9Y4D1-2"/>
    <property type="protein sequence ID" value="ENSP00000354162.3"/>
    <property type="gene ID" value="ENSG00000100592.16"/>
</dbReference>
<dbReference type="Ensembl" id="ENST00000395125.1">
    <molecule id="Q9Y4D1-1"/>
    <property type="protein sequence ID" value="ENSP00000378557.1"/>
    <property type="gene ID" value="ENSG00000100592.16"/>
</dbReference>
<dbReference type="GeneID" id="23002"/>
<dbReference type="KEGG" id="hsa:23002"/>
<dbReference type="MANE-Select" id="ENST00000360909.8">
    <molecule id="Q9Y4D1-2"/>
    <property type="protein sequence ID" value="ENSP00000354162.3"/>
    <property type="RefSeq nucleotide sequence ID" value="NM_001270520.2"/>
    <property type="RefSeq protein sequence ID" value="NP_001257449.1"/>
</dbReference>
<dbReference type="UCSC" id="uc001xea.3">
    <molecule id="Q9Y4D1-1"/>
    <property type="organism name" value="human"/>
</dbReference>
<dbReference type="AGR" id="HGNC:18142"/>
<dbReference type="CTD" id="23002"/>
<dbReference type="DisGeNET" id="23002"/>
<dbReference type="GeneCards" id="DAAM1"/>
<dbReference type="HGNC" id="HGNC:18142">
    <property type="gene designation" value="DAAM1"/>
</dbReference>
<dbReference type="HPA" id="ENSG00000100592">
    <property type="expression patterns" value="Low tissue specificity"/>
</dbReference>
<dbReference type="MIM" id="606626">
    <property type="type" value="gene"/>
</dbReference>
<dbReference type="neXtProt" id="NX_Q9Y4D1"/>
<dbReference type="OpenTargets" id="ENSG00000100592"/>
<dbReference type="PharmGKB" id="PA27129"/>
<dbReference type="VEuPathDB" id="HostDB:ENSG00000100592"/>
<dbReference type="eggNOG" id="KOG1922">
    <property type="taxonomic scope" value="Eukaryota"/>
</dbReference>
<dbReference type="GeneTree" id="ENSGT00940000156452"/>
<dbReference type="HOGENOM" id="CLU_002356_1_0_1"/>
<dbReference type="InParanoid" id="Q9Y4D1"/>
<dbReference type="OMA" id="AMLYFQE"/>
<dbReference type="OrthoDB" id="1104827at2759"/>
<dbReference type="PAN-GO" id="Q9Y4D1">
    <property type="GO annotations" value="1 GO annotation based on evolutionary models"/>
</dbReference>
<dbReference type="PhylomeDB" id="Q9Y4D1"/>
<dbReference type="TreeFam" id="TF314602"/>
<dbReference type="PathwayCommons" id="Q9Y4D1"/>
<dbReference type="Reactome" id="R-HSA-4086400">
    <property type="pathway name" value="PCP/CE pathway"/>
</dbReference>
<dbReference type="Reactome" id="R-HSA-5663220">
    <property type="pathway name" value="RHO GTPases Activate Formins"/>
</dbReference>
<dbReference type="Reactome" id="R-HSA-8980692">
    <property type="pathway name" value="RHOA GTPase cycle"/>
</dbReference>
<dbReference type="Reactome" id="R-HSA-9013026">
    <property type="pathway name" value="RHOB GTPase cycle"/>
</dbReference>
<dbReference type="Reactome" id="R-HSA-9013106">
    <property type="pathway name" value="RHOC GTPase cycle"/>
</dbReference>
<dbReference type="Reactome" id="R-HSA-9013148">
    <property type="pathway name" value="CDC42 GTPase cycle"/>
</dbReference>
<dbReference type="SignaLink" id="Q9Y4D1"/>
<dbReference type="SIGNOR" id="Q9Y4D1"/>
<dbReference type="BioGRID-ORCS" id="23002">
    <property type="hits" value="10 hits in 1157 CRISPR screens"/>
</dbReference>
<dbReference type="CD-CODE" id="FB4E32DD">
    <property type="entry name" value="Presynaptic clusters and postsynaptic densities"/>
</dbReference>
<dbReference type="ChiTaRS" id="DAAM1">
    <property type="organism name" value="human"/>
</dbReference>
<dbReference type="EvolutionaryTrace" id="Q9Y4D1"/>
<dbReference type="GeneWiki" id="DAAM1"/>
<dbReference type="GenomeRNAi" id="23002"/>
<dbReference type="Pharos" id="Q9Y4D1">
    <property type="development level" value="Tbio"/>
</dbReference>
<dbReference type="PRO" id="PR:Q9Y4D1"/>
<dbReference type="Proteomes" id="UP000005640">
    <property type="component" value="Chromosome 14"/>
</dbReference>
<dbReference type="RNAct" id="Q9Y4D1">
    <property type="molecule type" value="protein"/>
</dbReference>
<dbReference type="Bgee" id="ENSG00000100592">
    <property type="expression patterns" value="Expressed in oocyte and 212 other cell types or tissues"/>
</dbReference>
<dbReference type="ExpressionAtlas" id="Q9Y4D1">
    <property type="expression patterns" value="baseline and differential"/>
</dbReference>
<dbReference type="GO" id="GO:0036064">
    <property type="term" value="C:ciliary basal body"/>
    <property type="evidence" value="ECO:0000314"/>
    <property type="project" value="UniProtKB"/>
</dbReference>
<dbReference type="GO" id="GO:0005829">
    <property type="term" value="C:cytosol"/>
    <property type="evidence" value="ECO:0000314"/>
    <property type="project" value="HPA"/>
</dbReference>
<dbReference type="GO" id="GO:0098978">
    <property type="term" value="C:glutamatergic synapse"/>
    <property type="evidence" value="ECO:0007669"/>
    <property type="project" value="Ensembl"/>
</dbReference>
<dbReference type="GO" id="GO:0016020">
    <property type="term" value="C:membrane"/>
    <property type="evidence" value="ECO:0007005"/>
    <property type="project" value="UniProtKB"/>
</dbReference>
<dbReference type="GO" id="GO:0031514">
    <property type="term" value="C:motile cilium"/>
    <property type="evidence" value="ECO:0000314"/>
    <property type="project" value="UniProtKB"/>
</dbReference>
<dbReference type="GO" id="GO:0048471">
    <property type="term" value="C:perinuclear region of cytoplasm"/>
    <property type="evidence" value="ECO:0000250"/>
    <property type="project" value="UniProtKB"/>
</dbReference>
<dbReference type="GO" id="GO:0005886">
    <property type="term" value="C:plasma membrane"/>
    <property type="evidence" value="ECO:0000314"/>
    <property type="project" value="HPA"/>
</dbReference>
<dbReference type="GO" id="GO:0098793">
    <property type="term" value="C:presynapse"/>
    <property type="evidence" value="ECO:0007669"/>
    <property type="project" value="Ensembl"/>
</dbReference>
<dbReference type="GO" id="GO:0001725">
    <property type="term" value="C:stress fiber"/>
    <property type="evidence" value="ECO:0000314"/>
    <property type="project" value="UniProtKB"/>
</dbReference>
<dbReference type="GO" id="GO:0003779">
    <property type="term" value="F:actin binding"/>
    <property type="evidence" value="ECO:0007669"/>
    <property type="project" value="UniProtKB-KW"/>
</dbReference>
<dbReference type="GO" id="GO:0042802">
    <property type="term" value="F:identical protein binding"/>
    <property type="evidence" value="ECO:0000353"/>
    <property type="project" value="IntAct"/>
</dbReference>
<dbReference type="GO" id="GO:0031267">
    <property type="term" value="F:small GTPase binding"/>
    <property type="evidence" value="ECO:0007669"/>
    <property type="project" value="InterPro"/>
</dbReference>
<dbReference type="GO" id="GO:0099140">
    <property type="term" value="P:presynaptic actin cytoskeleton organization"/>
    <property type="evidence" value="ECO:0007669"/>
    <property type="project" value="Ensembl"/>
</dbReference>
<dbReference type="GO" id="GO:0060071">
    <property type="term" value="P:Wnt signaling pathway, planar cell polarity pathway"/>
    <property type="evidence" value="ECO:0000303"/>
    <property type="project" value="ParkinsonsUK-UCL"/>
</dbReference>
<dbReference type="FunFam" id="1.10.238.150:FF:000001">
    <property type="entry name" value="Dishevelled associated activator of morphogenesis 1"/>
    <property type="match status" value="1"/>
</dbReference>
<dbReference type="FunFam" id="1.20.120.330:FF:000010">
    <property type="entry name" value="Dishevelled associated activator of morphogenesis 1"/>
    <property type="match status" value="1"/>
</dbReference>
<dbReference type="FunFam" id="1.20.58.2220:FF:000002">
    <property type="entry name" value="Dishevelled associated activator of morphogenesis 1"/>
    <property type="match status" value="1"/>
</dbReference>
<dbReference type="FunFam" id="1.25.10.10:FF:000012">
    <property type="entry name" value="Dishevelled associated activator of morphogenesis 2"/>
    <property type="match status" value="1"/>
</dbReference>
<dbReference type="Gene3D" id="1.20.58.2220">
    <property type="entry name" value="Formin, FH2 domain"/>
    <property type="match status" value="1"/>
</dbReference>
<dbReference type="Gene3D" id="1.10.238.150">
    <property type="entry name" value="Formin, FH3 diaphanous domain"/>
    <property type="match status" value="1"/>
</dbReference>
<dbReference type="Gene3D" id="1.25.10.10">
    <property type="entry name" value="Leucine-rich Repeat Variant"/>
    <property type="match status" value="1"/>
</dbReference>
<dbReference type="Gene3D" id="1.20.120.330">
    <property type="entry name" value="Nucleotidyltransferases domain 2"/>
    <property type="match status" value="1"/>
</dbReference>
<dbReference type="InterPro" id="IPR011989">
    <property type="entry name" value="ARM-like"/>
</dbReference>
<dbReference type="InterPro" id="IPR016024">
    <property type="entry name" value="ARM-type_fold"/>
</dbReference>
<dbReference type="InterPro" id="IPR014767">
    <property type="entry name" value="DAD_dom"/>
</dbReference>
<dbReference type="InterPro" id="IPR015425">
    <property type="entry name" value="FH2_Formin"/>
</dbReference>
<dbReference type="InterPro" id="IPR042201">
    <property type="entry name" value="FH2_Formin_sf"/>
</dbReference>
<dbReference type="InterPro" id="IPR010472">
    <property type="entry name" value="FH3_dom"/>
</dbReference>
<dbReference type="InterPro" id="IPR051425">
    <property type="entry name" value="Formin_Homology"/>
</dbReference>
<dbReference type="InterPro" id="IPR014768">
    <property type="entry name" value="GBD/FH3_dom"/>
</dbReference>
<dbReference type="InterPro" id="IPR010473">
    <property type="entry name" value="GTPase-bd"/>
</dbReference>
<dbReference type="PANTHER" id="PTHR45725:SF16">
    <property type="entry name" value="DISHEVELED-ASSOCIATED ACTIVATOR OF MORPHOGENESIS 1"/>
    <property type="match status" value="1"/>
</dbReference>
<dbReference type="PANTHER" id="PTHR45725">
    <property type="entry name" value="FORMIN HOMOLOGY 2 FAMILY MEMBER"/>
    <property type="match status" value="1"/>
</dbReference>
<dbReference type="Pfam" id="PF06367">
    <property type="entry name" value="Drf_FH3"/>
    <property type="match status" value="1"/>
</dbReference>
<dbReference type="Pfam" id="PF06371">
    <property type="entry name" value="Drf_GBD"/>
    <property type="match status" value="1"/>
</dbReference>
<dbReference type="Pfam" id="PF02181">
    <property type="entry name" value="FH2"/>
    <property type="match status" value="1"/>
</dbReference>
<dbReference type="SMART" id="SM01139">
    <property type="entry name" value="Drf_FH3"/>
    <property type="match status" value="1"/>
</dbReference>
<dbReference type="SMART" id="SM01140">
    <property type="entry name" value="Drf_GBD"/>
    <property type="match status" value="1"/>
</dbReference>
<dbReference type="SMART" id="SM00498">
    <property type="entry name" value="FH2"/>
    <property type="match status" value="1"/>
</dbReference>
<dbReference type="SUPFAM" id="SSF48371">
    <property type="entry name" value="ARM repeat"/>
    <property type="match status" value="1"/>
</dbReference>
<dbReference type="SUPFAM" id="SSF101447">
    <property type="entry name" value="Formin homology 2 domain (FH2 domain)"/>
    <property type="match status" value="1"/>
</dbReference>
<dbReference type="PROSITE" id="PS51231">
    <property type="entry name" value="DAD"/>
    <property type="match status" value="1"/>
</dbReference>
<dbReference type="PROSITE" id="PS51444">
    <property type="entry name" value="FH2"/>
    <property type="match status" value="1"/>
</dbReference>
<dbReference type="PROSITE" id="PS51232">
    <property type="entry name" value="GBD_FH3"/>
    <property type="match status" value="1"/>
</dbReference>